<evidence type="ECO:0000250" key="1">
    <source>
        <dbReference type="UniProtKB" id="Q66GQ5"/>
    </source>
</evidence>
<evidence type="ECO:0000255" key="2"/>
<evidence type="ECO:0000255" key="3">
    <source>
        <dbReference type="PROSITE-ProRule" id="PRU00498"/>
    </source>
</evidence>
<evidence type="ECO:0000269" key="4">
    <source>
    </source>
</evidence>
<evidence type="ECO:0000269" key="5">
    <source>
    </source>
</evidence>
<evidence type="ECO:0000269" key="6">
    <source>
    </source>
</evidence>
<evidence type="ECO:0000303" key="7">
    <source>
    </source>
</evidence>
<evidence type="ECO:0000303" key="8">
    <source>
    </source>
</evidence>
<evidence type="ECO:0000305" key="9"/>
<evidence type="ECO:0000312" key="10">
    <source>
        <dbReference type="EMBL" id="AAG51327.1"/>
    </source>
</evidence>
<evidence type="ECO:0000312" key="11">
    <source>
        <dbReference type="EMBL" id="AEE74412.1"/>
    </source>
</evidence>
<evidence type="ECO:0000312" key="12">
    <source>
        <dbReference type="EMBL" id="BAE98681.1"/>
    </source>
</evidence>
<keyword id="KW-0025">Alternative splicing</keyword>
<keyword id="KW-0256">Endoplasmic reticulum</keyword>
<keyword id="KW-0325">Glycoprotein</keyword>
<keyword id="KW-0333">Golgi apparatus</keyword>
<keyword id="KW-0472">Membrane</keyword>
<keyword id="KW-0560">Oxidoreductase</keyword>
<keyword id="KW-0597">Phosphoprotein</keyword>
<keyword id="KW-1185">Reference proteome</keyword>
<keyword id="KW-0808">Transferase</keyword>
<keyword id="KW-0812">Transmembrane</keyword>
<keyword id="KW-1133">Transmembrane helix</keyword>
<sequence>MASSSPVTPGLMSVVFGIVPVIVAWLYSEYLHYAKYSVSAKTRHSDVNLVEIAKDFVKEDDKALLIEDGGGLQSASPRAKGPTTHSPLIRFVLLDESFLVENRLTLRAIIEFAVLMVYFYICDRTDVFNSSKKSYNRDLFLFLYFLLIIVSAITSFTIHTDKSPFSGKAIMYLNRHQTEEWKGWMQVLFLMYHYFAAAEYYNAIRVFIACYVWMTGFGNFSYYYIRKDFSLARFAQMMWRLNFLVIFSCIVLNNSYMLYYICPMHTLFTLMVYGALGIMSKYNEMGSVIAAKFFACFVVVIIVWEIPGVFEWIWSPFTLLMGYNDPAKPQLPLLHEWHFRSGLDRYIWIIGMLYAYYHPTVESWMDKLEEAEMKFRVAIKTSVALIALTVGYFWYEYIYKMDKLTYNKYHPYTSWIPITVYICLRNITQSFRGYSLTLLAWLGKITLETYISQFHIWLRSGVPDGQPKLLLSLVPDYPLLNFMLTTSIYVAISYRLFELTNTLKTAFIPTKDDKRLVYNTISALIICTCLYFFSFILITIPQKLV</sequence>
<organism evidence="12">
    <name type="scientific">Arabidopsis thaliana</name>
    <name type="common">Mouse-ear cress</name>
    <dbReference type="NCBI Taxonomy" id="3702"/>
    <lineage>
        <taxon>Eukaryota</taxon>
        <taxon>Viridiplantae</taxon>
        <taxon>Streptophyta</taxon>
        <taxon>Embryophyta</taxon>
        <taxon>Tracheophyta</taxon>
        <taxon>Spermatophyta</taxon>
        <taxon>Magnoliopsida</taxon>
        <taxon>eudicotyledons</taxon>
        <taxon>Gunneridae</taxon>
        <taxon>Pentapetalae</taxon>
        <taxon>rosids</taxon>
        <taxon>malvids</taxon>
        <taxon>Brassicales</taxon>
        <taxon>Brassicaceae</taxon>
        <taxon>Camelineae</taxon>
        <taxon>Arabidopsis</taxon>
    </lineage>
</organism>
<proteinExistence type="evidence at protein level"/>
<comment type="function">
    <text evidence="4 5 6">Probable O-acetyltransferase involved in the acetylation of cell wall polymers (both pectic and nonpectic polysaccharides) and of xylan during secondary wall biosynthesis. Catalyzes the O-acetylation of xyloglucan.</text>
</comment>
<comment type="function">
    <text evidence="4">Seems required for infection by the necrotrophic fungal pathogen Botrytis cinerea.</text>
</comment>
<comment type="subcellular location">
    <subcellularLocation>
        <location evidence="5">Golgi apparatus membrane</location>
        <topology evidence="2">Multi-pass membrane protein</topology>
    </subcellularLocation>
    <subcellularLocation>
        <location evidence="4">Endoplasmic reticulum membrane</location>
        <topology evidence="2">Multi-pass membrane protein</topology>
    </subcellularLocation>
</comment>
<comment type="alternative products">
    <event type="alternative splicing"/>
    <isoform>
        <id>Q0WW17-1</id>
        <name>1</name>
        <sequence type="displayed"/>
    </isoform>
    <isoform>
        <id>Q0WW17-2</id>
        <name>2</name>
        <sequence type="described" ref="VSP_057925"/>
    </isoform>
    <isoform>
        <id>Q0WW17-3</id>
        <name>3</name>
        <sequence type="described" ref="VSP_057925 VSP_057926"/>
    </isoform>
    <isoform>
        <id>Q0WW17-4</id>
        <name>4</name>
        <sequence type="described" ref="VSP_057927"/>
    </isoform>
</comment>
<comment type="tissue specificity">
    <text evidence="4 5">Expressed in cells undergoing secondary wall thickeningin a SND1-dependent manner, such as xylem cells. Slightly elevated in the inflorescence stems (PubMed:21673009). Mainly observed in leaves and inflorescence stem tops, but present ubiquitously (PubMed:21212300).</text>
</comment>
<comment type="disruption phenotype">
    <text evidence="4 5 6">Decreased levels of acetylated cell wall polymers and lower amounts of acetic acid in single mutant. Increased tolerance toward the necrotrophic fungal pathogen Botrytis cinerea (PubMed:21212300). Severe growth phenotypes (e.g. dwarf and abnormal flower organs) associated with reduction in the secondary wall thickening and the stem mechanical strength in the quadruple mutant rwa1 rwa2 rwa3 rwa4 and characterized by reduced xylan acetylation and altered ratio of non-methylated to methylated glucuronic acid side chains. Absence of interfascicular fibers and xylem cells differentiation (PubMed:21673009, PubMed:24019426). The double mutant rwa2 rwa4 and triple mutants rwa2 rwa3 rwa4, rwa1 rwa2 rwa3 and rwa1 rwa2 rwa4 are also dwarfs with abnormal morphology. Altered O-acetylated xyloglucans (XyG) oligosaccharides (XyGOs) composition (PubMed:24019426).</text>
</comment>
<comment type="similarity">
    <text evidence="9">Belongs to the PC-esterase family. CASD1 subfamily.</text>
</comment>
<name>RWA2_ARATH</name>
<protein>
    <recommendedName>
        <fullName evidence="7 8">Protein REDUCED WALL ACETYLATION 2</fullName>
        <ecNumber evidence="9">2.3.1.-</ecNumber>
    </recommendedName>
</protein>
<reference key="1">
    <citation type="journal article" date="2000" name="Nature">
        <title>Sequence and analysis of chromosome 3 of the plant Arabidopsis thaliana.</title>
        <authorList>
            <person name="Salanoubat M."/>
            <person name="Lemcke K."/>
            <person name="Rieger M."/>
            <person name="Ansorge W."/>
            <person name="Unseld M."/>
            <person name="Fartmann B."/>
            <person name="Valle G."/>
            <person name="Bloecker H."/>
            <person name="Perez-Alonso M."/>
            <person name="Obermaier B."/>
            <person name="Delseny M."/>
            <person name="Boutry M."/>
            <person name="Grivell L.A."/>
            <person name="Mache R."/>
            <person name="Puigdomenech P."/>
            <person name="De Simone V."/>
            <person name="Choisne N."/>
            <person name="Artiguenave F."/>
            <person name="Robert C."/>
            <person name="Brottier P."/>
            <person name="Wincker P."/>
            <person name="Cattolico L."/>
            <person name="Weissenbach J."/>
            <person name="Saurin W."/>
            <person name="Quetier F."/>
            <person name="Schaefer M."/>
            <person name="Mueller-Auer S."/>
            <person name="Gabel C."/>
            <person name="Fuchs M."/>
            <person name="Benes V."/>
            <person name="Wurmbach E."/>
            <person name="Drzonek H."/>
            <person name="Erfle H."/>
            <person name="Jordan N."/>
            <person name="Bangert S."/>
            <person name="Wiedelmann R."/>
            <person name="Kranz H."/>
            <person name="Voss H."/>
            <person name="Holland R."/>
            <person name="Brandt P."/>
            <person name="Nyakatura G."/>
            <person name="Vezzi A."/>
            <person name="D'Angelo M."/>
            <person name="Pallavicini A."/>
            <person name="Toppo S."/>
            <person name="Simionati B."/>
            <person name="Conrad A."/>
            <person name="Hornischer K."/>
            <person name="Kauer G."/>
            <person name="Loehnert T.-H."/>
            <person name="Nordsiek G."/>
            <person name="Reichelt J."/>
            <person name="Scharfe M."/>
            <person name="Schoen O."/>
            <person name="Bargues M."/>
            <person name="Terol J."/>
            <person name="Climent J."/>
            <person name="Navarro P."/>
            <person name="Collado C."/>
            <person name="Perez-Perez A."/>
            <person name="Ottenwaelder B."/>
            <person name="Duchemin D."/>
            <person name="Cooke R."/>
            <person name="Laudie M."/>
            <person name="Berger-Llauro C."/>
            <person name="Purnelle B."/>
            <person name="Masuy D."/>
            <person name="de Haan M."/>
            <person name="Maarse A.C."/>
            <person name="Alcaraz J.-P."/>
            <person name="Cottet A."/>
            <person name="Casacuberta E."/>
            <person name="Monfort A."/>
            <person name="Argiriou A."/>
            <person name="Flores M."/>
            <person name="Liguori R."/>
            <person name="Vitale D."/>
            <person name="Mannhaupt G."/>
            <person name="Haase D."/>
            <person name="Schoof H."/>
            <person name="Rudd S."/>
            <person name="Zaccaria P."/>
            <person name="Mewes H.-W."/>
            <person name="Mayer K.F.X."/>
            <person name="Kaul S."/>
            <person name="Town C.D."/>
            <person name="Koo H.L."/>
            <person name="Tallon L.J."/>
            <person name="Jenkins J."/>
            <person name="Rooney T."/>
            <person name="Rizzo M."/>
            <person name="Walts A."/>
            <person name="Utterback T."/>
            <person name="Fujii C.Y."/>
            <person name="Shea T.P."/>
            <person name="Creasy T.H."/>
            <person name="Haas B."/>
            <person name="Maiti R."/>
            <person name="Wu D."/>
            <person name="Peterson J."/>
            <person name="Van Aken S."/>
            <person name="Pai G."/>
            <person name="Militscher J."/>
            <person name="Sellers P."/>
            <person name="Gill J.E."/>
            <person name="Feldblyum T.V."/>
            <person name="Preuss D."/>
            <person name="Lin X."/>
            <person name="Nierman W.C."/>
            <person name="Salzberg S.L."/>
            <person name="White O."/>
            <person name="Venter J.C."/>
            <person name="Fraser C.M."/>
            <person name="Kaneko T."/>
            <person name="Nakamura Y."/>
            <person name="Sato S."/>
            <person name="Kato T."/>
            <person name="Asamizu E."/>
            <person name="Sasamoto S."/>
            <person name="Kimura T."/>
            <person name="Idesawa K."/>
            <person name="Kawashima K."/>
            <person name="Kishida Y."/>
            <person name="Kiyokawa C."/>
            <person name="Kohara M."/>
            <person name="Matsumoto M."/>
            <person name="Matsuno A."/>
            <person name="Muraki A."/>
            <person name="Nakayama S."/>
            <person name="Nakazaki N."/>
            <person name="Shinpo S."/>
            <person name="Takeuchi C."/>
            <person name="Wada T."/>
            <person name="Watanabe A."/>
            <person name="Yamada M."/>
            <person name="Yasuda M."/>
            <person name="Tabata S."/>
        </authorList>
    </citation>
    <scope>NUCLEOTIDE SEQUENCE [LARGE SCALE GENOMIC DNA]</scope>
    <source>
        <strain>cv. Columbia</strain>
    </source>
</reference>
<reference key="2">
    <citation type="journal article" date="2017" name="Plant J.">
        <title>Araport11: a complete reannotation of the Arabidopsis thaliana reference genome.</title>
        <authorList>
            <person name="Cheng C.Y."/>
            <person name="Krishnakumar V."/>
            <person name="Chan A.P."/>
            <person name="Thibaud-Nissen F."/>
            <person name="Schobel S."/>
            <person name="Town C.D."/>
        </authorList>
    </citation>
    <scope>GENOME REANNOTATION</scope>
    <source>
        <strain>cv. Columbia</strain>
    </source>
</reference>
<reference key="3">
    <citation type="submission" date="2004-04" db="EMBL/GenBank/DDBJ databases">
        <title>Arabidopsis ORF clones.</title>
        <authorList>
            <person name="Kim C.J."/>
            <person name="Chen H."/>
            <person name="Cheuk R.F."/>
            <person name="Shinn P."/>
            <person name="Carninci P."/>
            <person name="Hayashizaki Y."/>
            <person name="Ishida J."/>
            <person name="Kamiya A."/>
            <person name="Kawai J."/>
            <person name="Narusaka M."/>
            <person name="Sakurai T."/>
            <person name="Satou M."/>
            <person name="Seki M."/>
            <person name="Shinozaki K."/>
            <person name="Ecker J.R."/>
        </authorList>
    </citation>
    <scope>NUCLEOTIDE SEQUENCE [LARGE SCALE MRNA] (ISOFORM 3)</scope>
    <source>
        <strain>cv. Columbia</strain>
    </source>
</reference>
<reference key="4">
    <citation type="submission" date="2004-09" db="EMBL/GenBank/DDBJ databases">
        <title>Large-scale analysis of RIKEN Arabidopsis full-length (RAFL) cDNAs.</title>
        <authorList>
            <person name="Totoki Y."/>
            <person name="Seki M."/>
            <person name="Ishida J."/>
            <person name="Nakajima M."/>
            <person name="Enju A."/>
            <person name="Kamiya A."/>
            <person name="Narusaka M."/>
            <person name="Shin-i T."/>
            <person name="Nakagawa M."/>
            <person name="Sakamoto N."/>
            <person name="Oishi K."/>
            <person name="Kohara Y."/>
            <person name="Kobayashi M."/>
            <person name="Toyoda A."/>
            <person name="Sakaki Y."/>
            <person name="Sakurai T."/>
            <person name="Iida K."/>
            <person name="Akiyama K."/>
            <person name="Satou M."/>
            <person name="Toyoda T."/>
            <person name="Konagaya A."/>
            <person name="Carninci P."/>
            <person name="Kawai J."/>
            <person name="Hayashizaki Y."/>
            <person name="Shinozaki K."/>
        </authorList>
    </citation>
    <scope>NUCLEOTIDE SEQUENCE [LARGE SCALE MRNA] (ISOFORMS 1 AND 2)</scope>
    <source>
        <strain>cv. Columbia</strain>
    </source>
</reference>
<reference key="5">
    <citation type="journal article" date="2009" name="Plant Physiol.">
        <title>Large-scale Arabidopsis phosphoproteome profiling reveals novel chloroplast kinase substrates and phosphorylation networks.</title>
        <authorList>
            <person name="Reiland S."/>
            <person name="Messerli G."/>
            <person name="Baerenfaller K."/>
            <person name="Gerrits B."/>
            <person name="Endler A."/>
            <person name="Grossmann J."/>
            <person name="Gruissem W."/>
            <person name="Baginsky S."/>
        </authorList>
    </citation>
    <scope>IDENTIFICATION BY MASS SPECTROMETRY [LARGE SCALE ANALYSIS]</scope>
</reference>
<reference key="6">
    <citation type="journal article" date="2011" name="Plant Cell Physiol.">
        <title>The four Arabidopsis reduced wall acetylation genes are expressed in secondary wall-containing cells and required for the acetylation of xylan.</title>
        <authorList>
            <person name="Lee C."/>
            <person name="Teng Q."/>
            <person name="Zhong R."/>
            <person name="Ye Z.H."/>
        </authorList>
    </citation>
    <scope>FUNCTION</scope>
    <scope>DISRUPTION PHENOTYPE</scope>
    <scope>TISSUE SPECIFICITY</scope>
    <scope>SUBCELLULAR LOCATION</scope>
    <scope>GENE FAMILY</scope>
    <scope>NOMENCLATURE</scope>
</reference>
<reference key="7">
    <citation type="journal article" date="2011" name="Plant Physiol.">
        <title>Loss-of-function mutation of REDUCED WALL ACETYLATION2 in Arabidopsis leads to reduced cell wall acetylation and increased resistance to Botrytis cinerea.</title>
        <authorList>
            <person name="Manabe Y."/>
            <person name="Nafisi M."/>
            <person name="Verhertbruggen Y."/>
            <person name="Orfila C."/>
            <person name="Gille S."/>
            <person name="Rautengarten C."/>
            <person name="Cherk C."/>
            <person name="Marcus S.E."/>
            <person name="Somerville S."/>
            <person name="Pauly M."/>
            <person name="Knox J.P."/>
            <person name="Sakuragi Y."/>
            <person name="Scheller H.V."/>
        </authorList>
    </citation>
    <scope>FUNCTION</scope>
    <scope>DISRUPTION PHENOTYPE</scope>
    <scope>TISSUE SPECIFICITY</scope>
    <scope>SUBCELLULAR LOCATION</scope>
    <scope>GENE FAMILY</scope>
    <scope>NOMENCLATURE</scope>
    <source>
        <strain>cv. Columbia</strain>
    </source>
</reference>
<reference key="8">
    <citation type="journal article" date="2013" name="Plant Physiol.">
        <title>Reduced wall acetylation proteins play vital and distinct roles in cell wall O-acetylation in Arabidopsis.</title>
        <authorList>
            <person name="Manabe Y."/>
            <person name="Verhertbruggen Y."/>
            <person name="Gille S."/>
            <person name="Harholt J."/>
            <person name="Chong S.-L."/>
            <person name="Pawar P.M.-A."/>
            <person name="Mellerowicz E.J."/>
            <person name="Tenkanen M."/>
            <person name="Cheng K."/>
            <person name="Pauly M."/>
            <person name="Scheller H.V."/>
        </authorList>
    </citation>
    <scope>FUNCTION</scope>
    <scope>DISRUPTION PHENOTYPE</scope>
    <scope>GENE FAMILY</scope>
</reference>
<feature type="chain" id="PRO_0000434396" description="Protein REDUCED WALL ACETYLATION 2">
    <location>
        <begin position="1"/>
        <end position="545"/>
    </location>
</feature>
<feature type="transmembrane region" description="Helical" evidence="2">
    <location>
        <begin position="7"/>
        <end position="27"/>
    </location>
</feature>
<feature type="transmembrane region" description="Helical" evidence="2">
    <location>
        <begin position="108"/>
        <end position="128"/>
    </location>
</feature>
<feature type="transmembrane region" description="Helical" evidence="2">
    <location>
        <begin position="139"/>
        <end position="159"/>
    </location>
</feature>
<feature type="transmembrane region" description="Helical" evidence="2">
    <location>
        <begin position="184"/>
        <end position="204"/>
    </location>
</feature>
<feature type="transmembrane region" description="Helical" evidence="2">
    <location>
        <begin position="205"/>
        <end position="225"/>
    </location>
</feature>
<feature type="transmembrane region" description="Helical" evidence="2">
    <location>
        <begin position="238"/>
        <end position="257"/>
    </location>
</feature>
<feature type="transmembrane region" description="Helical" evidence="2">
    <location>
        <begin position="258"/>
        <end position="278"/>
    </location>
</feature>
<feature type="transmembrane region" description="Helical" evidence="2">
    <location>
        <begin position="293"/>
        <end position="313"/>
    </location>
</feature>
<feature type="transmembrane region" description="Helical" evidence="2">
    <location>
        <begin position="346"/>
        <end position="366"/>
    </location>
</feature>
<feature type="transmembrane region" description="Helical" evidence="2">
    <location>
        <begin position="378"/>
        <end position="398"/>
    </location>
</feature>
<feature type="transmembrane region" description="Helical" evidence="2">
    <location>
        <begin position="438"/>
        <end position="458"/>
    </location>
</feature>
<feature type="transmembrane region" description="Helical" evidence="2">
    <location>
        <begin position="470"/>
        <end position="490"/>
    </location>
</feature>
<feature type="transmembrane region" description="Helical" evidence="2">
    <location>
        <begin position="521"/>
        <end position="541"/>
    </location>
</feature>
<feature type="modified residue" description="Phosphoserine" evidence="1">
    <location>
        <position position="45"/>
    </location>
</feature>
<feature type="glycosylation site" description="N-linked (GlcNAc...) asparagine" evidence="3">
    <location>
        <position position="129"/>
    </location>
</feature>
<feature type="glycosylation site" description="N-linked (GlcNAc...) asparagine" evidence="3">
    <location>
        <position position="426"/>
    </location>
</feature>
<feature type="splice variant" id="VSP_057925" description="In isoform 2 and isoform 3.">
    <location>
        <position position="43"/>
    </location>
</feature>
<feature type="splice variant" id="VSP_057926" description="In isoform 3.">
    <location>
        <begin position="420"/>
        <end position="545"/>
    </location>
</feature>
<feature type="splice variant" id="VSP_057927" description="In isoform 4.">
    <original>V</original>
    <variation>VSQNFIFLCGRKLFFPWYLSSLIC</variation>
    <location>
        <position position="545"/>
    </location>
</feature>
<accession>Q0WW17</accession>
<accession>B3H643</accession>
<accession>Q67YS5</accession>
<accession>Q9C8Z6</accession>
<gene>
    <name evidence="7 8" type="primary">RWA2</name>
    <name evidence="11" type="ordered locus">At3g06550</name>
    <name evidence="10" type="ORF">F5E6.12</name>
</gene>
<dbReference type="EC" id="2.3.1.-" evidence="9"/>
<dbReference type="EMBL" id="AC020580">
    <property type="protein sequence ID" value="AAG51327.1"/>
    <property type="molecule type" value="Genomic_DNA"/>
</dbReference>
<dbReference type="EMBL" id="CP002686">
    <property type="protein sequence ID" value="AEE74412.1"/>
    <property type="molecule type" value="Genomic_DNA"/>
</dbReference>
<dbReference type="EMBL" id="CP002686">
    <property type="protein sequence ID" value="AEE74413.1"/>
    <property type="molecule type" value="Genomic_DNA"/>
</dbReference>
<dbReference type="EMBL" id="CP002686">
    <property type="protein sequence ID" value="AEE74414.1"/>
    <property type="molecule type" value="Genomic_DNA"/>
</dbReference>
<dbReference type="EMBL" id="AK176393">
    <property type="protein sequence ID" value="BAD44156.1"/>
    <property type="molecule type" value="mRNA"/>
</dbReference>
<dbReference type="EMBL" id="BT012556">
    <property type="protein sequence ID" value="AAS99700.1"/>
    <property type="molecule type" value="mRNA"/>
</dbReference>
<dbReference type="EMBL" id="AK226542">
    <property type="protein sequence ID" value="BAE98681.1"/>
    <property type="molecule type" value="mRNA"/>
</dbReference>
<dbReference type="RefSeq" id="NP_001078116.1">
    <molecule id="Q0WW17-4"/>
    <property type="nucleotide sequence ID" value="NM_001084647.5"/>
</dbReference>
<dbReference type="RefSeq" id="NP_001118592.1">
    <molecule id="Q0WW17-2"/>
    <property type="nucleotide sequence ID" value="NM_001125120.1"/>
</dbReference>
<dbReference type="RefSeq" id="NP_187307.3">
    <molecule id="Q0WW17-1"/>
    <property type="nucleotide sequence ID" value="NM_111531.5"/>
</dbReference>
<dbReference type="FunCoup" id="Q0WW17">
    <property type="interactions" value="1451"/>
</dbReference>
<dbReference type="STRING" id="3702.Q0WW17"/>
<dbReference type="GlyCosmos" id="Q0WW17">
    <property type="glycosylation" value="2 sites, No reported glycans"/>
</dbReference>
<dbReference type="GlyGen" id="Q0WW17">
    <property type="glycosylation" value="3 sites"/>
</dbReference>
<dbReference type="iPTMnet" id="Q0WW17"/>
<dbReference type="PaxDb" id="3702-AT3G06550.2"/>
<dbReference type="ProMEX" id="Q0WW17"/>
<dbReference type="ProteomicsDB" id="228032">
    <molecule id="Q0WW17-1"/>
</dbReference>
<dbReference type="EnsemblPlants" id="AT3G06550.1">
    <molecule id="Q0WW17-1"/>
    <property type="protein sequence ID" value="AT3G06550.1"/>
    <property type="gene ID" value="AT3G06550"/>
</dbReference>
<dbReference type="EnsemblPlants" id="AT3G06550.2">
    <molecule id="Q0WW17-4"/>
    <property type="protein sequence ID" value="AT3G06550.2"/>
    <property type="gene ID" value="AT3G06550"/>
</dbReference>
<dbReference type="EnsemblPlants" id="AT3G06550.3">
    <molecule id="Q0WW17-2"/>
    <property type="protein sequence ID" value="AT3G06550.3"/>
    <property type="gene ID" value="AT3G06550"/>
</dbReference>
<dbReference type="GeneID" id="819834"/>
<dbReference type="Gramene" id="AT3G06550.1">
    <molecule id="Q0WW17-1"/>
    <property type="protein sequence ID" value="AT3G06550.1"/>
    <property type="gene ID" value="AT3G06550"/>
</dbReference>
<dbReference type="Gramene" id="AT3G06550.2">
    <molecule id="Q0WW17-4"/>
    <property type="protein sequence ID" value="AT3G06550.2"/>
    <property type="gene ID" value="AT3G06550"/>
</dbReference>
<dbReference type="Gramene" id="AT3G06550.3">
    <molecule id="Q0WW17-2"/>
    <property type="protein sequence ID" value="AT3G06550.3"/>
    <property type="gene ID" value="AT3G06550"/>
</dbReference>
<dbReference type="KEGG" id="ath:AT3G06550"/>
<dbReference type="Araport" id="AT3G06550"/>
<dbReference type="TAIR" id="AT3G06550">
    <property type="gene designation" value="RWA2"/>
</dbReference>
<dbReference type="eggNOG" id="KOG1699">
    <property type="taxonomic scope" value="Eukaryota"/>
</dbReference>
<dbReference type="HOGENOM" id="CLU_020608_0_0_1"/>
<dbReference type="InParanoid" id="Q0WW17"/>
<dbReference type="OMA" id="QSLLHEW"/>
<dbReference type="PhylomeDB" id="Q0WW17"/>
<dbReference type="PRO" id="PR:Q0WW17"/>
<dbReference type="Proteomes" id="UP000006548">
    <property type="component" value="Chromosome 3"/>
</dbReference>
<dbReference type="ExpressionAtlas" id="Q0WW17">
    <property type="expression patterns" value="baseline and differential"/>
</dbReference>
<dbReference type="GO" id="GO:0005783">
    <property type="term" value="C:endoplasmic reticulum"/>
    <property type="evidence" value="ECO:0000314"/>
    <property type="project" value="TAIR"/>
</dbReference>
<dbReference type="GO" id="GO:0005789">
    <property type="term" value="C:endoplasmic reticulum membrane"/>
    <property type="evidence" value="ECO:0007669"/>
    <property type="project" value="UniProtKB-SubCell"/>
</dbReference>
<dbReference type="GO" id="GO:0005794">
    <property type="term" value="C:Golgi apparatus"/>
    <property type="evidence" value="ECO:0000314"/>
    <property type="project" value="UniProtKB"/>
</dbReference>
<dbReference type="GO" id="GO:0000139">
    <property type="term" value="C:Golgi membrane"/>
    <property type="evidence" value="ECO:0007669"/>
    <property type="project" value="UniProtKB-SubCell"/>
</dbReference>
<dbReference type="GO" id="GO:0000138">
    <property type="term" value="C:Golgi trans cisterna"/>
    <property type="evidence" value="ECO:0007005"/>
    <property type="project" value="TAIR"/>
</dbReference>
<dbReference type="GO" id="GO:0016491">
    <property type="term" value="F:oxidoreductase activity"/>
    <property type="evidence" value="ECO:0007669"/>
    <property type="project" value="UniProtKB-KW"/>
</dbReference>
<dbReference type="GO" id="GO:0016740">
    <property type="term" value="F:transferase activity"/>
    <property type="evidence" value="ECO:0007669"/>
    <property type="project" value="UniProtKB-KW"/>
</dbReference>
<dbReference type="GO" id="GO:0050832">
    <property type="term" value="P:defense response to fungus"/>
    <property type="evidence" value="ECO:0000315"/>
    <property type="project" value="TAIR"/>
</dbReference>
<dbReference type="GO" id="GO:0009834">
    <property type="term" value="P:plant-type secondary cell wall biogenesis"/>
    <property type="evidence" value="ECO:0000315"/>
    <property type="project" value="UniProtKB"/>
</dbReference>
<dbReference type="GO" id="GO:0005976">
    <property type="term" value="P:polysaccharide metabolic process"/>
    <property type="evidence" value="ECO:0000315"/>
    <property type="project" value="UniProtKB"/>
</dbReference>
<dbReference type="GO" id="GO:1990937">
    <property type="term" value="P:xylan acetylation"/>
    <property type="evidence" value="ECO:0000316"/>
    <property type="project" value="TAIR"/>
</dbReference>
<dbReference type="GO" id="GO:0045492">
    <property type="term" value="P:xylan biosynthetic process"/>
    <property type="evidence" value="ECO:0000315"/>
    <property type="project" value="UniProtKB"/>
</dbReference>
<dbReference type="GO" id="GO:0045491">
    <property type="term" value="P:xylan metabolic process"/>
    <property type="evidence" value="ECO:0000315"/>
    <property type="project" value="UniProtKB"/>
</dbReference>
<dbReference type="GO" id="GO:0010411">
    <property type="term" value="P:xyloglucan metabolic process"/>
    <property type="evidence" value="ECO:0000315"/>
    <property type="project" value="UniProtKB"/>
</dbReference>
<dbReference type="InterPro" id="IPR012419">
    <property type="entry name" value="Cas1_AcylTrans_dom"/>
</dbReference>
<dbReference type="PANTHER" id="PTHR13533">
    <property type="entry name" value="N-ACETYLNEURAMINATE 9-O-ACETYLTRANSFERASE"/>
    <property type="match status" value="1"/>
</dbReference>
<dbReference type="PANTHER" id="PTHR13533:SF48">
    <property type="entry name" value="PROTEIN REDUCED WALL ACETYLATION 2"/>
    <property type="match status" value="1"/>
</dbReference>
<dbReference type="Pfam" id="PF07779">
    <property type="entry name" value="Cas1_AcylT"/>
    <property type="match status" value="1"/>
</dbReference>